<name>PCNA_NITMS</name>
<comment type="function">
    <text evidence="1">Sliding clamp subunit that acts as a moving platform for DNA processing. Responsible for tethering the catalytic subunit of DNA polymerase and other proteins to DNA during high-speed replication.</text>
</comment>
<comment type="subunit">
    <text evidence="1">Homotrimer. The subunits circularize to form a toroid; DNA passes through its center. Replication factor C (RFC) is required to load the toroid on the DNA.</text>
</comment>
<comment type="similarity">
    <text evidence="1">Belongs to the PCNA family.</text>
</comment>
<feature type="chain" id="PRO_1000115816" description="DNA polymerase sliding clamp">
    <location>
        <begin position="1"/>
        <end position="248"/>
    </location>
</feature>
<sequence>MTFGAKTSGSDDLKAIISAISTLVEEATFVATAEGISFRGMDPSHVALIDISWPNSAFEKYECDSDIKFGVRIDEFSKLIKRADKKDSIEISISEQNMLLVTVGKNKKYKMRLIESSATDTPLPKIPYDSKIILSSSKFDKILGDVQVVSDYLTIHTSDSKGDFSGKGDSGEVVIDLDKDDEGIEEISSKEDSVGTYSLEYLNPVVKAVGTTAGFITCEFSSAKPLRIEFKVANIGRIHFYLAPRVES</sequence>
<accession>A9A2X4</accession>
<proteinExistence type="inferred from homology"/>
<keyword id="KW-0235">DNA replication</keyword>
<keyword id="KW-0238">DNA-binding</keyword>
<keyword id="KW-1185">Reference proteome</keyword>
<gene>
    <name evidence="1" type="primary">pcn</name>
    <name type="ordered locus">Nmar_1755</name>
</gene>
<dbReference type="EMBL" id="CP000866">
    <property type="protein sequence ID" value="ABX13651.1"/>
    <property type="molecule type" value="Genomic_DNA"/>
</dbReference>
<dbReference type="RefSeq" id="WP_012216137.1">
    <property type="nucleotide sequence ID" value="NC_010085.1"/>
</dbReference>
<dbReference type="SMR" id="A9A2X4"/>
<dbReference type="FunCoup" id="A9A2X4">
    <property type="interactions" value="159"/>
</dbReference>
<dbReference type="STRING" id="436308.Nmar_1755"/>
<dbReference type="EnsemblBacteria" id="ABX13651">
    <property type="protein sequence ID" value="ABX13651"/>
    <property type="gene ID" value="Nmar_1755"/>
</dbReference>
<dbReference type="GeneID" id="5773094"/>
<dbReference type="KEGG" id="nmr:Nmar_1755"/>
<dbReference type="eggNOG" id="arCOG00488">
    <property type="taxonomic scope" value="Archaea"/>
</dbReference>
<dbReference type="HOGENOM" id="CLU_043978_3_0_2"/>
<dbReference type="InParanoid" id="A9A2X4"/>
<dbReference type="OrthoDB" id="14749at2157"/>
<dbReference type="PhylomeDB" id="A9A2X4"/>
<dbReference type="Proteomes" id="UP000000792">
    <property type="component" value="Chromosome"/>
</dbReference>
<dbReference type="GO" id="GO:0003677">
    <property type="term" value="F:DNA binding"/>
    <property type="evidence" value="ECO:0007669"/>
    <property type="project" value="UniProtKB-UniRule"/>
</dbReference>
<dbReference type="GO" id="GO:0030337">
    <property type="term" value="F:DNA polymerase processivity factor activity"/>
    <property type="evidence" value="ECO:0000318"/>
    <property type="project" value="GO_Central"/>
</dbReference>
<dbReference type="GO" id="GO:0006272">
    <property type="term" value="P:leading strand elongation"/>
    <property type="evidence" value="ECO:0000318"/>
    <property type="project" value="GO_Central"/>
</dbReference>
<dbReference type="GO" id="GO:0006275">
    <property type="term" value="P:regulation of DNA replication"/>
    <property type="evidence" value="ECO:0007669"/>
    <property type="project" value="UniProtKB-UniRule"/>
</dbReference>
<dbReference type="CDD" id="cd00577">
    <property type="entry name" value="PCNA"/>
    <property type="match status" value="1"/>
</dbReference>
<dbReference type="FunFam" id="3.70.10.10:FF:000040">
    <property type="entry name" value="DNA polymerase sliding clamp"/>
    <property type="match status" value="1"/>
</dbReference>
<dbReference type="Gene3D" id="3.70.10.10">
    <property type="match status" value="1"/>
</dbReference>
<dbReference type="HAMAP" id="MF_00317">
    <property type="entry name" value="DNApol_clamp_arch"/>
    <property type="match status" value="1"/>
</dbReference>
<dbReference type="InterPro" id="IPR046938">
    <property type="entry name" value="DNA_clamp_sf"/>
</dbReference>
<dbReference type="InterPro" id="IPR000730">
    <property type="entry name" value="Pr_cel_nuc_antig"/>
</dbReference>
<dbReference type="InterPro" id="IPR022649">
    <property type="entry name" value="Pr_cel_nuc_antig_C"/>
</dbReference>
<dbReference type="InterPro" id="IPR022648">
    <property type="entry name" value="Pr_cel_nuc_antig_N"/>
</dbReference>
<dbReference type="NCBIfam" id="TIGR00590">
    <property type="entry name" value="pcna"/>
    <property type="match status" value="1"/>
</dbReference>
<dbReference type="PANTHER" id="PTHR11352">
    <property type="entry name" value="PROLIFERATING CELL NUCLEAR ANTIGEN"/>
    <property type="match status" value="1"/>
</dbReference>
<dbReference type="PANTHER" id="PTHR11352:SF0">
    <property type="entry name" value="PROLIFERATING CELL NUCLEAR ANTIGEN"/>
    <property type="match status" value="1"/>
</dbReference>
<dbReference type="Pfam" id="PF02747">
    <property type="entry name" value="PCNA_C"/>
    <property type="match status" value="1"/>
</dbReference>
<dbReference type="Pfam" id="PF00705">
    <property type="entry name" value="PCNA_N"/>
    <property type="match status" value="1"/>
</dbReference>
<dbReference type="PRINTS" id="PR00339">
    <property type="entry name" value="PCNACYCLIN"/>
</dbReference>
<dbReference type="SUPFAM" id="SSF55979">
    <property type="entry name" value="DNA clamp"/>
    <property type="match status" value="2"/>
</dbReference>
<protein>
    <recommendedName>
        <fullName evidence="1">DNA polymerase sliding clamp</fullName>
    </recommendedName>
    <alternativeName>
        <fullName evidence="1">Proliferating cell nuclear antigen homolog</fullName>
        <shortName evidence="1">PCNA</shortName>
    </alternativeName>
</protein>
<reference key="1">
    <citation type="journal article" date="2010" name="Proc. Natl. Acad. Sci. U.S.A.">
        <title>Nitrosopumilus maritimus genome reveals unique mechanisms for nitrification and autotrophy in globally distributed marine crenarchaea.</title>
        <authorList>
            <person name="Walker C.B."/>
            <person name="de la Torre J.R."/>
            <person name="Klotz M.G."/>
            <person name="Urakawa H."/>
            <person name="Pinel N."/>
            <person name="Arp D.J."/>
            <person name="Brochier-Armanet C."/>
            <person name="Chain P.S."/>
            <person name="Chan P.P."/>
            <person name="Gollabgir A."/>
            <person name="Hemp J."/>
            <person name="Hugler M."/>
            <person name="Karr E.A."/>
            <person name="Konneke M."/>
            <person name="Shin M."/>
            <person name="Lawton T.J."/>
            <person name="Lowe T."/>
            <person name="Martens-Habbena W."/>
            <person name="Sayavedra-Soto L.A."/>
            <person name="Lang D."/>
            <person name="Sievert S.M."/>
            <person name="Rosenzweig A.C."/>
            <person name="Manning G."/>
            <person name="Stahl D.A."/>
        </authorList>
    </citation>
    <scope>NUCLEOTIDE SEQUENCE [LARGE SCALE GENOMIC DNA]</scope>
    <source>
        <strain>SCM1</strain>
    </source>
</reference>
<organism>
    <name type="scientific">Nitrosopumilus maritimus (strain SCM1)</name>
    <dbReference type="NCBI Taxonomy" id="436308"/>
    <lineage>
        <taxon>Archaea</taxon>
        <taxon>Nitrososphaerota</taxon>
        <taxon>Nitrososphaeria</taxon>
        <taxon>Nitrosopumilales</taxon>
        <taxon>Nitrosopumilaceae</taxon>
        <taxon>Nitrosopumilus</taxon>
    </lineage>
</organism>
<evidence type="ECO:0000255" key="1">
    <source>
        <dbReference type="HAMAP-Rule" id="MF_00317"/>
    </source>
</evidence>